<accession>Q5NHI8</accession>
<protein>
    <recommendedName>
        <fullName evidence="1">Arginine--tRNA ligase</fullName>
        <ecNumber evidence="1">6.1.1.19</ecNumber>
    </recommendedName>
    <alternativeName>
        <fullName evidence="1">Arginyl-tRNA synthetase</fullName>
        <shortName evidence="1">ArgRS</shortName>
    </alternativeName>
</protein>
<feature type="chain" id="PRO_0000242023" description="Arginine--tRNA ligase">
    <location>
        <begin position="1"/>
        <end position="581"/>
    </location>
</feature>
<feature type="short sequence motif" description="'HIGH' region">
    <location>
        <begin position="122"/>
        <end position="132"/>
    </location>
</feature>
<name>SYR_FRATT</name>
<gene>
    <name evidence="1" type="primary">argS</name>
    <name type="ordered locus">FTT_0466c</name>
</gene>
<comment type="catalytic activity">
    <reaction evidence="1">
        <text>tRNA(Arg) + L-arginine + ATP = L-arginyl-tRNA(Arg) + AMP + diphosphate</text>
        <dbReference type="Rhea" id="RHEA:20301"/>
        <dbReference type="Rhea" id="RHEA-COMP:9658"/>
        <dbReference type="Rhea" id="RHEA-COMP:9673"/>
        <dbReference type="ChEBI" id="CHEBI:30616"/>
        <dbReference type="ChEBI" id="CHEBI:32682"/>
        <dbReference type="ChEBI" id="CHEBI:33019"/>
        <dbReference type="ChEBI" id="CHEBI:78442"/>
        <dbReference type="ChEBI" id="CHEBI:78513"/>
        <dbReference type="ChEBI" id="CHEBI:456215"/>
        <dbReference type="EC" id="6.1.1.19"/>
    </reaction>
</comment>
<comment type="subunit">
    <text evidence="1">Monomer.</text>
</comment>
<comment type="subcellular location">
    <subcellularLocation>
        <location evidence="1">Cytoplasm</location>
    </subcellularLocation>
</comment>
<comment type="similarity">
    <text evidence="1">Belongs to the class-I aminoacyl-tRNA synthetase family.</text>
</comment>
<proteinExistence type="inferred from homology"/>
<keyword id="KW-0030">Aminoacyl-tRNA synthetase</keyword>
<keyword id="KW-0067">ATP-binding</keyword>
<keyword id="KW-0963">Cytoplasm</keyword>
<keyword id="KW-0436">Ligase</keyword>
<keyword id="KW-0547">Nucleotide-binding</keyword>
<keyword id="KW-0648">Protein biosynthesis</keyword>
<keyword id="KW-1185">Reference proteome</keyword>
<reference key="1">
    <citation type="journal article" date="2005" name="Nat. Genet.">
        <title>The complete genome sequence of Francisella tularensis, the causative agent of tularemia.</title>
        <authorList>
            <person name="Larsson P."/>
            <person name="Oyston P.C.F."/>
            <person name="Chain P."/>
            <person name="Chu M.C."/>
            <person name="Duffield M."/>
            <person name="Fuxelius H.-H."/>
            <person name="Garcia E."/>
            <person name="Haelltorp G."/>
            <person name="Johansson D."/>
            <person name="Isherwood K.E."/>
            <person name="Karp P.D."/>
            <person name="Larsson E."/>
            <person name="Liu Y."/>
            <person name="Michell S."/>
            <person name="Prior J."/>
            <person name="Prior R."/>
            <person name="Malfatti S."/>
            <person name="Sjoestedt A."/>
            <person name="Svensson K."/>
            <person name="Thompson N."/>
            <person name="Vergez L."/>
            <person name="Wagg J.K."/>
            <person name="Wren B.W."/>
            <person name="Lindler L.E."/>
            <person name="Andersson S.G.E."/>
            <person name="Forsman M."/>
            <person name="Titball R.W."/>
        </authorList>
    </citation>
    <scope>NUCLEOTIDE SEQUENCE [LARGE SCALE GENOMIC DNA]</scope>
    <source>
        <strain>SCHU S4 / Schu 4</strain>
    </source>
</reference>
<sequence>MNIENYLSETLAKVFQKLGYAESFAKVVTSTREDVRHFQCNGAMPLAKFAKKPPLAIAEEIVEHIDAEDIFAKLEVAKPGFINITLAPKFLADTTNRFLNSNKFGVQNNLPNRKVVLDFGGPNVAKPMHVGHIRSALLGDALQRIHRFCGDTVVSDVHLGDWGTQMGMLIEEIKLQSPQLVYFDENYTGEYPTESPVTVQELAEIYPRASKRCKSDINEMEKARLATFELQQGRRGYVALWQHFVRISIDAVKKDFDSLDVHFDLWLGESDANKFIDEMISYFQANNFIYEDEGAWVIDTNKDGVPPLIVIKKDGGVMYGTTDLATLWQRSKDLDPDEIIYVVDKRQSLHFKQVFSVAERTKVVSEKCKLKHVAFGTVNGKDGRPFKTREGGVMHLADLISQAKEYAKNRMPDENDDSIINQIAMATIKFGDLINNYANDYFFDLEKFAQHEGKTGPYLLYTVVRAKSILRKIFGDNYDIKSLAKDYKVVNAHNEYEEKLQLQLIQFPIAVQRAYENSQPHHICEYAYSLANSFNKFYVNCPINNLDDESLKKARIALCMATVKAMTIASDLIGISIPERM</sequence>
<dbReference type="EC" id="6.1.1.19" evidence="1"/>
<dbReference type="EMBL" id="AJ749949">
    <property type="protein sequence ID" value="CAG45099.1"/>
    <property type="molecule type" value="Genomic_DNA"/>
</dbReference>
<dbReference type="RefSeq" id="WP_003020254.1">
    <property type="nucleotide sequence ID" value="NC_006570.2"/>
</dbReference>
<dbReference type="RefSeq" id="YP_169504.1">
    <property type="nucleotide sequence ID" value="NC_006570.2"/>
</dbReference>
<dbReference type="SMR" id="Q5NHI8"/>
<dbReference type="IntAct" id="Q5NHI8">
    <property type="interactions" value="4"/>
</dbReference>
<dbReference type="STRING" id="177416.FTT_0466c"/>
<dbReference type="DNASU" id="3190944"/>
<dbReference type="EnsemblBacteria" id="CAG45099">
    <property type="protein sequence ID" value="CAG45099"/>
    <property type="gene ID" value="FTT_0466c"/>
</dbReference>
<dbReference type="KEGG" id="ftu:FTT_0466c"/>
<dbReference type="eggNOG" id="COG0018">
    <property type="taxonomic scope" value="Bacteria"/>
</dbReference>
<dbReference type="OrthoDB" id="9803211at2"/>
<dbReference type="Proteomes" id="UP000001174">
    <property type="component" value="Chromosome"/>
</dbReference>
<dbReference type="GO" id="GO:0005737">
    <property type="term" value="C:cytoplasm"/>
    <property type="evidence" value="ECO:0007669"/>
    <property type="project" value="UniProtKB-SubCell"/>
</dbReference>
<dbReference type="GO" id="GO:0004814">
    <property type="term" value="F:arginine-tRNA ligase activity"/>
    <property type="evidence" value="ECO:0007669"/>
    <property type="project" value="UniProtKB-UniRule"/>
</dbReference>
<dbReference type="GO" id="GO:0005524">
    <property type="term" value="F:ATP binding"/>
    <property type="evidence" value="ECO:0007669"/>
    <property type="project" value="UniProtKB-UniRule"/>
</dbReference>
<dbReference type="GO" id="GO:0006420">
    <property type="term" value="P:arginyl-tRNA aminoacylation"/>
    <property type="evidence" value="ECO:0007669"/>
    <property type="project" value="UniProtKB-UniRule"/>
</dbReference>
<dbReference type="CDD" id="cd00671">
    <property type="entry name" value="ArgRS_core"/>
    <property type="match status" value="1"/>
</dbReference>
<dbReference type="Gene3D" id="3.30.1360.70">
    <property type="entry name" value="Arginyl tRNA synthetase N-terminal domain"/>
    <property type="match status" value="1"/>
</dbReference>
<dbReference type="Gene3D" id="3.40.50.620">
    <property type="entry name" value="HUPs"/>
    <property type="match status" value="1"/>
</dbReference>
<dbReference type="Gene3D" id="1.10.730.10">
    <property type="entry name" value="Isoleucyl-tRNA Synthetase, Domain 1"/>
    <property type="match status" value="1"/>
</dbReference>
<dbReference type="HAMAP" id="MF_00123">
    <property type="entry name" value="Arg_tRNA_synth"/>
    <property type="match status" value="1"/>
</dbReference>
<dbReference type="InterPro" id="IPR001412">
    <property type="entry name" value="aa-tRNA-synth_I_CS"/>
</dbReference>
<dbReference type="InterPro" id="IPR001278">
    <property type="entry name" value="Arg-tRNA-ligase"/>
</dbReference>
<dbReference type="InterPro" id="IPR005148">
    <property type="entry name" value="Arg-tRNA-synth_N"/>
</dbReference>
<dbReference type="InterPro" id="IPR036695">
    <property type="entry name" value="Arg-tRNA-synth_N_sf"/>
</dbReference>
<dbReference type="InterPro" id="IPR035684">
    <property type="entry name" value="ArgRS_core"/>
</dbReference>
<dbReference type="InterPro" id="IPR008909">
    <property type="entry name" value="DALR_anticod-bd"/>
</dbReference>
<dbReference type="InterPro" id="IPR014729">
    <property type="entry name" value="Rossmann-like_a/b/a_fold"/>
</dbReference>
<dbReference type="InterPro" id="IPR009080">
    <property type="entry name" value="tRNAsynth_Ia_anticodon-bd"/>
</dbReference>
<dbReference type="NCBIfam" id="TIGR00456">
    <property type="entry name" value="argS"/>
    <property type="match status" value="1"/>
</dbReference>
<dbReference type="PANTHER" id="PTHR11956:SF5">
    <property type="entry name" value="ARGININE--TRNA LIGASE, CYTOPLASMIC"/>
    <property type="match status" value="1"/>
</dbReference>
<dbReference type="PANTHER" id="PTHR11956">
    <property type="entry name" value="ARGINYL-TRNA SYNTHETASE"/>
    <property type="match status" value="1"/>
</dbReference>
<dbReference type="Pfam" id="PF03485">
    <property type="entry name" value="Arg_tRNA_synt_N"/>
    <property type="match status" value="1"/>
</dbReference>
<dbReference type="Pfam" id="PF05746">
    <property type="entry name" value="DALR_1"/>
    <property type="match status" value="1"/>
</dbReference>
<dbReference type="Pfam" id="PF00750">
    <property type="entry name" value="tRNA-synt_1d"/>
    <property type="match status" value="1"/>
</dbReference>
<dbReference type="PRINTS" id="PR01038">
    <property type="entry name" value="TRNASYNTHARG"/>
</dbReference>
<dbReference type="SMART" id="SM01016">
    <property type="entry name" value="Arg_tRNA_synt_N"/>
    <property type="match status" value="1"/>
</dbReference>
<dbReference type="SMART" id="SM00836">
    <property type="entry name" value="DALR_1"/>
    <property type="match status" value="1"/>
</dbReference>
<dbReference type="SUPFAM" id="SSF47323">
    <property type="entry name" value="Anticodon-binding domain of a subclass of class I aminoacyl-tRNA synthetases"/>
    <property type="match status" value="1"/>
</dbReference>
<dbReference type="SUPFAM" id="SSF55190">
    <property type="entry name" value="Arginyl-tRNA synthetase (ArgRS), N-terminal 'additional' domain"/>
    <property type="match status" value="1"/>
</dbReference>
<dbReference type="SUPFAM" id="SSF52374">
    <property type="entry name" value="Nucleotidylyl transferase"/>
    <property type="match status" value="1"/>
</dbReference>
<dbReference type="PROSITE" id="PS00178">
    <property type="entry name" value="AA_TRNA_LIGASE_I"/>
    <property type="match status" value="1"/>
</dbReference>
<evidence type="ECO:0000255" key="1">
    <source>
        <dbReference type="HAMAP-Rule" id="MF_00123"/>
    </source>
</evidence>
<organism>
    <name type="scientific">Francisella tularensis subsp. tularensis (strain SCHU S4 / Schu 4)</name>
    <dbReference type="NCBI Taxonomy" id="177416"/>
    <lineage>
        <taxon>Bacteria</taxon>
        <taxon>Pseudomonadati</taxon>
        <taxon>Pseudomonadota</taxon>
        <taxon>Gammaproteobacteria</taxon>
        <taxon>Thiotrichales</taxon>
        <taxon>Francisellaceae</taxon>
        <taxon>Francisella</taxon>
    </lineage>
</organism>